<protein>
    <recommendedName>
        <fullName evidence="1">2-phytyl-1,4-naphtoquinone methyltransferase</fullName>
        <ecNumber evidence="1">2.1.1.329</ecNumber>
    </recommendedName>
    <alternativeName>
        <fullName evidence="1">Demethylphylloquinone methyltransferase</fullName>
    </alternativeName>
</protein>
<reference key="1">
    <citation type="submission" date="2005-08" db="EMBL/GenBank/DDBJ databases">
        <title>Complete sequence of chromosome 1 of Synechococcus elongatus PCC 7942.</title>
        <authorList>
            <consortium name="US DOE Joint Genome Institute"/>
            <person name="Copeland A."/>
            <person name="Lucas S."/>
            <person name="Lapidus A."/>
            <person name="Barry K."/>
            <person name="Detter J.C."/>
            <person name="Glavina T."/>
            <person name="Hammon N."/>
            <person name="Israni S."/>
            <person name="Pitluck S."/>
            <person name="Schmutz J."/>
            <person name="Larimer F."/>
            <person name="Land M."/>
            <person name="Kyrpides N."/>
            <person name="Lykidis A."/>
            <person name="Golden S."/>
            <person name="Richardson P."/>
        </authorList>
    </citation>
    <scope>NUCLEOTIDE SEQUENCE [LARGE SCALE GENOMIC DNA]</scope>
    <source>
        <strain>ATCC 33912 / PCC 7942 / FACHB-805</strain>
    </source>
</reference>
<gene>
    <name evidence="1" type="primary">menG</name>
    <name type="ordered locus">Synpcc7942_1099</name>
</gene>
<proteinExistence type="inferred from homology"/>
<sequence length="233" mass="25441">MSVLAPDAVEGLFDQIAPIYDNLNDQLSFGLHRLWKRMAVKWSAAKPGDRVLDLCCGSGDLAFLLAKVVGSKGQVIGFDRSQALLSVAGDRARQLASALVIDWQRGDALDLPFPDDHFDAATLGYGLRNVPDIPTVLRQLQRVLKPGARAAILDMHRPYSPLLRQFQQVYLDRWVVPAAAAQNCAAEYEYIDASLEAFPQGQQQVALAIAAGFQRAKHYELAAGLMGVLVVEA</sequence>
<keyword id="KW-0489">Methyltransferase</keyword>
<keyword id="KW-1185">Reference proteome</keyword>
<keyword id="KW-0949">S-adenosyl-L-methionine</keyword>
<keyword id="KW-0808">Transferase</keyword>
<dbReference type="EC" id="2.1.1.329" evidence="1"/>
<dbReference type="EMBL" id="CP000100">
    <property type="protein sequence ID" value="ABB57129.1"/>
    <property type="molecule type" value="Genomic_DNA"/>
</dbReference>
<dbReference type="SMR" id="Q31P90"/>
<dbReference type="STRING" id="1140.Synpcc7942_1099"/>
<dbReference type="PaxDb" id="1140-Synpcc7942_1099"/>
<dbReference type="KEGG" id="syf:Synpcc7942_1099"/>
<dbReference type="eggNOG" id="COG2226">
    <property type="taxonomic scope" value="Bacteria"/>
</dbReference>
<dbReference type="HOGENOM" id="CLU_037990_0_0_3"/>
<dbReference type="OrthoDB" id="9808140at2"/>
<dbReference type="BioCyc" id="SYNEL:SYNPCC7942_1099-MONOMER"/>
<dbReference type="UniPathway" id="UPA00995"/>
<dbReference type="Proteomes" id="UP000889800">
    <property type="component" value="Chromosome"/>
</dbReference>
<dbReference type="GO" id="GO:0052624">
    <property type="term" value="F:2-phytyl-1,4-naphthoquinone methyltransferase activity"/>
    <property type="evidence" value="ECO:0007669"/>
    <property type="project" value="UniProtKB-EC"/>
</dbReference>
<dbReference type="GO" id="GO:0032259">
    <property type="term" value="P:methylation"/>
    <property type="evidence" value="ECO:0007669"/>
    <property type="project" value="UniProtKB-KW"/>
</dbReference>
<dbReference type="GO" id="GO:0042372">
    <property type="term" value="P:phylloquinone biosynthetic process"/>
    <property type="evidence" value="ECO:0007669"/>
    <property type="project" value="UniProtKB-UniRule"/>
</dbReference>
<dbReference type="CDD" id="cd02440">
    <property type="entry name" value="AdoMet_MTases"/>
    <property type="match status" value="1"/>
</dbReference>
<dbReference type="Gene3D" id="3.40.50.150">
    <property type="entry name" value="Vaccinia Virus protein VP39"/>
    <property type="match status" value="1"/>
</dbReference>
<dbReference type="HAMAP" id="MF_01982">
    <property type="entry name" value="MenG_phylloquinone_subfam"/>
    <property type="match status" value="1"/>
</dbReference>
<dbReference type="HAMAP" id="MF_01813">
    <property type="entry name" value="MenG_UbiE_methyltr"/>
    <property type="match status" value="1"/>
</dbReference>
<dbReference type="InterPro" id="IPR032904">
    <property type="entry name" value="MenG"/>
</dbReference>
<dbReference type="InterPro" id="IPR029063">
    <property type="entry name" value="SAM-dependent_MTases_sf"/>
</dbReference>
<dbReference type="InterPro" id="IPR004033">
    <property type="entry name" value="UbiE/COQ5_MeTrFase"/>
</dbReference>
<dbReference type="InterPro" id="IPR023576">
    <property type="entry name" value="UbiE/COQ5_MeTrFase_CS"/>
</dbReference>
<dbReference type="NCBIfam" id="TIGR01934">
    <property type="entry name" value="MenG_MenH_UbiE"/>
    <property type="match status" value="1"/>
</dbReference>
<dbReference type="NCBIfam" id="NF001244">
    <property type="entry name" value="PRK00216.1-5"/>
    <property type="match status" value="1"/>
</dbReference>
<dbReference type="PANTHER" id="PTHR43591:SF24">
    <property type="entry name" value="2-METHOXY-6-POLYPRENYL-1,4-BENZOQUINOL METHYLASE, MITOCHONDRIAL"/>
    <property type="match status" value="1"/>
</dbReference>
<dbReference type="PANTHER" id="PTHR43591">
    <property type="entry name" value="METHYLTRANSFERASE"/>
    <property type="match status" value="1"/>
</dbReference>
<dbReference type="Pfam" id="PF01209">
    <property type="entry name" value="Ubie_methyltran"/>
    <property type="match status" value="1"/>
</dbReference>
<dbReference type="SUPFAM" id="SSF53335">
    <property type="entry name" value="S-adenosyl-L-methionine-dependent methyltransferases"/>
    <property type="match status" value="1"/>
</dbReference>
<dbReference type="PROSITE" id="PS51608">
    <property type="entry name" value="SAM_MT_UBIE"/>
    <property type="match status" value="1"/>
</dbReference>
<dbReference type="PROSITE" id="PS01183">
    <property type="entry name" value="UBIE_1"/>
    <property type="match status" value="1"/>
</dbReference>
<evidence type="ECO:0000255" key="1">
    <source>
        <dbReference type="HAMAP-Rule" id="MF_01982"/>
    </source>
</evidence>
<name>MENG_SYNE7</name>
<feature type="chain" id="PRO_1000056310" description="2-phytyl-1,4-naphtoquinone methyltransferase">
    <location>
        <begin position="1"/>
        <end position="233"/>
    </location>
</feature>
<comment type="function">
    <text evidence="1">Methyltransferase required for the conversion of 2-phytyl-1,4-beta-naphthoquinol to phylloquinol.</text>
</comment>
<comment type="catalytic activity">
    <reaction evidence="1">
        <text>demethylphylloquinol + S-adenosyl-L-methionine = phylloquinol + S-adenosyl-L-homocysteine + H(+)</text>
        <dbReference type="Rhea" id="RHEA:40551"/>
        <dbReference type="ChEBI" id="CHEBI:15378"/>
        <dbReference type="ChEBI" id="CHEBI:28433"/>
        <dbReference type="ChEBI" id="CHEBI:57856"/>
        <dbReference type="ChEBI" id="CHEBI:59789"/>
        <dbReference type="ChEBI" id="CHEBI:87844"/>
        <dbReference type="EC" id="2.1.1.329"/>
    </reaction>
</comment>
<comment type="pathway">
    <text evidence="1">Cofactor biosynthesis; phylloquinone biosynthesis.</text>
</comment>
<comment type="similarity">
    <text evidence="1">Belongs to the class I-like SAM-binding methyltransferase superfamily. MenG/UbiE family.</text>
</comment>
<organism>
    <name type="scientific">Synechococcus elongatus (strain ATCC 33912 / PCC 7942 / FACHB-805)</name>
    <name type="common">Anacystis nidulans R2</name>
    <dbReference type="NCBI Taxonomy" id="1140"/>
    <lineage>
        <taxon>Bacteria</taxon>
        <taxon>Bacillati</taxon>
        <taxon>Cyanobacteriota</taxon>
        <taxon>Cyanophyceae</taxon>
        <taxon>Synechococcales</taxon>
        <taxon>Synechococcaceae</taxon>
        <taxon>Synechococcus</taxon>
    </lineage>
</organism>
<accession>Q31P90</accession>